<dbReference type="EMBL" id="BX571857">
    <property type="protein sequence ID" value="CAG43571.1"/>
    <property type="molecule type" value="Genomic_DNA"/>
</dbReference>
<dbReference type="RefSeq" id="WP_000290301.1">
    <property type="nucleotide sequence ID" value="NC_002953.3"/>
</dbReference>
<dbReference type="SMR" id="Q6G890"/>
<dbReference type="KEGG" id="sas:SAS1766"/>
<dbReference type="HOGENOM" id="CLU_140243_3_0_9"/>
<dbReference type="Gene3D" id="1.20.1500.10">
    <property type="entry name" value="YheA/YmcA-like"/>
    <property type="match status" value="1"/>
</dbReference>
<dbReference type="HAMAP" id="MF_01526">
    <property type="entry name" value="UPF0342"/>
    <property type="match status" value="1"/>
</dbReference>
<dbReference type="InterPro" id="IPR010368">
    <property type="entry name" value="Com_YlbF"/>
</dbReference>
<dbReference type="InterPro" id="IPR023378">
    <property type="entry name" value="YheA/YmcA-like_dom_sf"/>
</dbReference>
<dbReference type="NCBIfam" id="NF010212">
    <property type="entry name" value="PRK13676.1-5"/>
    <property type="match status" value="1"/>
</dbReference>
<dbReference type="Pfam" id="PF06133">
    <property type="entry name" value="Com_YlbF"/>
    <property type="match status" value="1"/>
</dbReference>
<dbReference type="SUPFAM" id="SSF158622">
    <property type="entry name" value="YheA/YmcA-like"/>
    <property type="match status" value="1"/>
</dbReference>
<protein>
    <recommendedName>
        <fullName evidence="1">UPF0342 protein SAS1766</fullName>
    </recommendedName>
</protein>
<gene>
    <name type="ordered locus">SAS1766</name>
</gene>
<organism>
    <name type="scientific">Staphylococcus aureus (strain MSSA476)</name>
    <dbReference type="NCBI Taxonomy" id="282459"/>
    <lineage>
        <taxon>Bacteria</taxon>
        <taxon>Bacillati</taxon>
        <taxon>Bacillota</taxon>
        <taxon>Bacilli</taxon>
        <taxon>Bacillales</taxon>
        <taxon>Staphylococcaceae</taxon>
        <taxon>Staphylococcus</taxon>
    </lineage>
</organism>
<reference key="1">
    <citation type="journal article" date="2004" name="Proc. Natl. Acad. Sci. U.S.A.">
        <title>Complete genomes of two clinical Staphylococcus aureus strains: evidence for the rapid evolution of virulence and drug resistance.</title>
        <authorList>
            <person name="Holden M.T.G."/>
            <person name="Feil E.J."/>
            <person name="Lindsay J.A."/>
            <person name="Peacock S.J."/>
            <person name="Day N.P.J."/>
            <person name="Enright M.C."/>
            <person name="Foster T.J."/>
            <person name="Moore C.E."/>
            <person name="Hurst L."/>
            <person name="Atkin R."/>
            <person name="Barron A."/>
            <person name="Bason N."/>
            <person name="Bentley S.D."/>
            <person name="Chillingworth C."/>
            <person name="Chillingworth T."/>
            <person name="Churcher C."/>
            <person name="Clark L."/>
            <person name="Corton C."/>
            <person name="Cronin A."/>
            <person name="Doggett J."/>
            <person name="Dowd L."/>
            <person name="Feltwell T."/>
            <person name="Hance Z."/>
            <person name="Harris B."/>
            <person name="Hauser H."/>
            <person name="Holroyd S."/>
            <person name="Jagels K."/>
            <person name="James K.D."/>
            <person name="Lennard N."/>
            <person name="Line A."/>
            <person name="Mayes R."/>
            <person name="Moule S."/>
            <person name="Mungall K."/>
            <person name="Ormond D."/>
            <person name="Quail M.A."/>
            <person name="Rabbinowitsch E."/>
            <person name="Rutherford K.M."/>
            <person name="Sanders M."/>
            <person name="Sharp S."/>
            <person name="Simmonds M."/>
            <person name="Stevens K."/>
            <person name="Whitehead S."/>
            <person name="Barrell B.G."/>
            <person name="Spratt B.G."/>
            <person name="Parkhill J."/>
        </authorList>
    </citation>
    <scope>NUCLEOTIDE SEQUENCE [LARGE SCALE GENOMIC DNA]</scope>
    <source>
        <strain>MSSA476</strain>
    </source>
</reference>
<accession>Q6G890</accession>
<feature type="chain" id="PRO_0000109987" description="UPF0342 protein SAS1766">
    <location>
        <begin position="1"/>
        <end position="114"/>
    </location>
</feature>
<evidence type="ECO:0000255" key="1">
    <source>
        <dbReference type="HAMAP-Rule" id="MF_01526"/>
    </source>
</evidence>
<comment type="similarity">
    <text evidence="1">Belongs to the UPF0342 family.</text>
</comment>
<proteinExistence type="inferred from homology"/>
<sequence length="114" mass="13310">MAVNLYDYANQLEQALRESEEYKAIKEAFANVKANEESKKLFDEFRETQINFQQKQMQGEEIAEEDLQKAQEQAQAIEKDENISALMNAEQKMSQVFQEINQIIVKPLDEIYAD</sequence>
<name>Y1766_STAAS</name>